<gene>
    <name evidence="1" type="primary">mgrB</name>
    <name type="ordered locus">ECSE_2000</name>
</gene>
<organism>
    <name type="scientific">Escherichia coli (strain SE11)</name>
    <dbReference type="NCBI Taxonomy" id="409438"/>
    <lineage>
        <taxon>Bacteria</taxon>
        <taxon>Pseudomonadati</taxon>
        <taxon>Pseudomonadota</taxon>
        <taxon>Gammaproteobacteria</taxon>
        <taxon>Enterobacterales</taxon>
        <taxon>Enterobacteriaceae</taxon>
        <taxon>Escherichia</taxon>
    </lineage>
</organism>
<proteinExistence type="inferred from homology"/>
<evidence type="ECO:0000255" key="1">
    <source>
        <dbReference type="HAMAP-Rule" id="MF_01596"/>
    </source>
</evidence>
<keyword id="KW-0997">Cell inner membrane</keyword>
<keyword id="KW-1003">Cell membrane</keyword>
<keyword id="KW-0472">Membrane</keyword>
<keyword id="KW-0812">Transmembrane</keyword>
<keyword id="KW-1133">Transmembrane helix</keyword>
<accession>B6IBQ3</accession>
<feature type="chain" id="PRO_1000201564" description="PhoP/PhoQ regulator MgrB">
    <location>
        <begin position="1"/>
        <end position="47"/>
    </location>
</feature>
<feature type="transmembrane region" description="Helical" evidence="1">
    <location>
        <begin position="6"/>
        <end position="26"/>
    </location>
</feature>
<reference key="1">
    <citation type="journal article" date="2008" name="DNA Res.">
        <title>Complete genome sequence and comparative analysis of the wild-type commensal Escherichia coli strain SE11 isolated from a healthy adult.</title>
        <authorList>
            <person name="Oshima K."/>
            <person name="Toh H."/>
            <person name="Ogura Y."/>
            <person name="Sasamoto H."/>
            <person name="Morita H."/>
            <person name="Park S.-H."/>
            <person name="Ooka T."/>
            <person name="Iyoda S."/>
            <person name="Taylor T.D."/>
            <person name="Hayashi T."/>
            <person name="Itoh K."/>
            <person name="Hattori M."/>
        </authorList>
    </citation>
    <scope>NUCLEOTIDE SEQUENCE [LARGE SCALE GENOMIC DNA]</scope>
    <source>
        <strain>SE11</strain>
    </source>
</reference>
<protein>
    <recommendedName>
        <fullName evidence="1">PhoP/PhoQ regulator MgrB</fullName>
    </recommendedName>
</protein>
<name>MGRB_ECOSE</name>
<sequence>MKKFRWVVLVVVVLACLLLWAQVFNMMCDQDVQFFSGICAINQFIPW</sequence>
<comment type="function">
    <text evidence="1">PhoP-regulated transcription is redox-sensitive, being activated when the periplasm becomes more reducing. MgrB acts between DsbA/DsbB and PhoP/PhoQ in this pathway. Represses PhoP/PhoQ signaling, possibly by binding to the periplasmic domain of PhoQ, altering its activity and that of downstream effector PhoP.</text>
</comment>
<comment type="subunit">
    <text evidence="1">May form homooligomers. Probably interacts with the periplasmic domain of PhoQ.</text>
</comment>
<comment type="subcellular location">
    <subcellularLocation>
        <location evidence="1">Cell inner membrane</location>
        <topology evidence="1">Single-pass membrane protein</topology>
    </subcellularLocation>
</comment>
<comment type="similarity">
    <text evidence="1">Belongs to the MgrB family.</text>
</comment>
<dbReference type="EMBL" id="AP009240">
    <property type="protein sequence ID" value="BAG77524.1"/>
    <property type="molecule type" value="Genomic_DNA"/>
</dbReference>
<dbReference type="RefSeq" id="WP_000714550.1">
    <property type="nucleotide sequence ID" value="NC_011415.1"/>
</dbReference>
<dbReference type="SMR" id="B6IBQ3"/>
<dbReference type="GeneID" id="93776075"/>
<dbReference type="KEGG" id="ecy:ECSE_2000"/>
<dbReference type="HOGENOM" id="CLU_208030_1_0_6"/>
<dbReference type="Proteomes" id="UP000008199">
    <property type="component" value="Chromosome"/>
</dbReference>
<dbReference type="GO" id="GO:0005886">
    <property type="term" value="C:plasma membrane"/>
    <property type="evidence" value="ECO:0007669"/>
    <property type="project" value="UniProtKB-SubCell"/>
</dbReference>
<dbReference type="GO" id="GO:0070298">
    <property type="term" value="P:negative regulation of phosphorelay signal transduction system"/>
    <property type="evidence" value="ECO:0007669"/>
    <property type="project" value="UniProtKB-UniRule"/>
</dbReference>
<dbReference type="HAMAP" id="MF_01596">
    <property type="entry name" value="MgrB"/>
    <property type="match status" value="1"/>
</dbReference>
<dbReference type="InterPro" id="IPR020907">
    <property type="entry name" value="MgrB"/>
</dbReference>
<dbReference type="NCBIfam" id="NF007635">
    <property type="entry name" value="PRK10299.1"/>
    <property type="match status" value="1"/>
</dbReference>
<dbReference type="Pfam" id="PF13998">
    <property type="entry name" value="MgrB"/>
    <property type="match status" value="1"/>
</dbReference>
<dbReference type="PROSITE" id="PS51257">
    <property type="entry name" value="PROKAR_LIPOPROTEIN"/>
    <property type="match status" value="1"/>
</dbReference>